<feature type="chain" id="PRO_1000144407" description="Large ribosomal subunit protein bL17">
    <location>
        <begin position="1"/>
        <end position="126"/>
    </location>
</feature>
<reference key="1">
    <citation type="journal article" date="2009" name="Infect. Immun.">
        <title>Comparative genomics reveal extensive transposon-mediated genomic plasticity and diversity among potential effector proteins within the genus Coxiella.</title>
        <authorList>
            <person name="Beare P.A."/>
            <person name="Unsworth N."/>
            <person name="Andoh M."/>
            <person name="Voth D.E."/>
            <person name="Omsland A."/>
            <person name="Gilk S.D."/>
            <person name="Williams K.P."/>
            <person name="Sobral B.W."/>
            <person name="Kupko J.J. III"/>
            <person name="Porcella S.F."/>
            <person name="Samuel J.E."/>
            <person name="Heinzen R.A."/>
        </authorList>
    </citation>
    <scope>NUCLEOTIDE SEQUENCE [LARGE SCALE GENOMIC DNA]</scope>
    <source>
        <strain>CbuG_Q212</strain>
    </source>
</reference>
<accession>B6J237</accession>
<sequence length="126" mass="14543">MHHRKSGRHLNRTSAHRKAMLRNMAVSLFQHELIKTTLPKAKELRRVVEPLITLAKEDTVANRRLAFNRLRDDAIVAKLFKEIAPRHKERPGGYCRVLKYGFRNGDSAPMAIVELVDREESESSED</sequence>
<keyword id="KW-0687">Ribonucleoprotein</keyword>
<keyword id="KW-0689">Ribosomal protein</keyword>
<dbReference type="EMBL" id="CP001019">
    <property type="protein sequence ID" value="ACJ19015.1"/>
    <property type="molecule type" value="Genomic_DNA"/>
</dbReference>
<dbReference type="RefSeq" id="WP_010957469.1">
    <property type="nucleotide sequence ID" value="NC_011527.1"/>
</dbReference>
<dbReference type="SMR" id="B6J237"/>
<dbReference type="KEGG" id="cbg:CbuG_1741"/>
<dbReference type="HOGENOM" id="CLU_074407_2_0_6"/>
<dbReference type="GO" id="GO:0022625">
    <property type="term" value="C:cytosolic large ribosomal subunit"/>
    <property type="evidence" value="ECO:0007669"/>
    <property type="project" value="TreeGrafter"/>
</dbReference>
<dbReference type="GO" id="GO:0003735">
    <property type="term" value="F:structural constituent of ribosome"/>
    <property type="evidence" value="ECO:0007669"/>
    <property type="project" value="InterPro"/>
</dbReference>
<dbReference type="GO" id="GO:0006412">
    <property type="term" value="P:translation"/>
    <property type="evidence" value="ECO:0007669"/>
    <property type="project" value="UniProtKB-UniRule"/>
</dbReference>
<dbReference type="FunFam" id="3.90.1030.10:FF:000001">
    <property type="entry name" value="50S ribosomal protein L17"/>
    <property type="match status" value="1"/>
</dbReference>
<dbReference type="Gene3D" id="3.90.1030.10">
    <property type="entry name" value="Ribosomal protein L17"/>
    <property type="match status" value="1"/>
</dbReference>
<dbReference type="HAMAP" id="MF_01368">
    <property type="entry name" value="Ribosomal_bL17"/>
    <property type="match status" value="1"/>
</dbReference>
<dbReference type="InterPro" id="IPR000456">
    <property type="entry name" value="Ribosomal_bL17"/>
</dbReference>
<dbReference type="InterPro" id="IPR047859">
    <property type="entry name" value="Ribosomal_bL17_CS"/>
</dbReference>
<dbReference type="InterPro" id="IPR036373">
    <property type="entry name" value="Ribosomal_bL17_sf"/>
</dbReference>
<dbReference type="NCBIfam" id="TIGR00059">
    <property type="entry name" value="L17"/>
    <property type="match status" value="1"/>
</dbReference>
<dbReference type="PANTHER" id="PTHR14413:SF16">
    <property type="entry name" value="LARGE RIBOSOMAL SUBUNIT PROTEIN BL17M"/>
    <property type="match status" value="1"/>
</dbReference>
<dbReference type="PANTHER" id="PTHR14413">
    <property type="entry name" value="RIBOSOMAL PROTEIN L17"/>
    <property type="match status" value="1"/>
</dbReference>
<dbReference type="Pfam" id="PF01196">
    <property type="entry name" value="Ribosomal_L17"/>
    <property type="match status" value="1"/>
</dbReference>
<dbReference type="SUPFAM" id="SSF64263">
    <property type="entry name" value="Prokaryotic ribosomal protein L17"/>
    <property type="match status" value="1"/>
</dbReference>
<dbReference type="PROSITE" id="PS01167">
    <property type="entry name" value="RIBOSOMAL_L17"/>
    <property type="match status" value="1"/>
</dbReference>
<protein>
    <recommendedName>
        <fullName evidence="1">Large ribosomal subunit protein bL17</fullName>
    </recommendedName>
    <alternativeName>
        <fullName evidence="2">50S ribosomal protein L17</fullName>
    </alternativeName>
</protein>
<organism>
    <name type="scientific">Coxiella burnetii (strain CbuG_Q212)</name>
    <name type="common">Coxiella burnetii (strain Q212)</name>
    <dbReference type="NCBI Taxonomy" id="434923"/>
    <lineage>
        <taxon>Bacteria</taxon>
        <taxon>Pseudomonadati</taxon>
        <taxon>Pseudomonadota</taxon>
        <taxon>Gammaproteobacteria</taxon>
        <taxon>Legionellales</taxon>
        <taxon>Coxiellaceae</taxon>
        <taxon>Coxiella</taxon>
    </lineage>
</organism>
<comment type="subunit">
    <text evidence="1">Part of the 50S ribosomal subunit. Contacts protein L32.</text>
</comment>
<comment type="similarity">
    <text evidence="1">Belongs to the bacterial ribosomal protein bL17 family.</text>
</comment>
<gene>
    <name evidence="1" type="primary">rplQ</name>
    <name type="ordered locus">CbuG_1741</name>
</gene>
<proteinExistence type="inferred from homology"/>
<evidence type="ECO:0000255" key="1">
    <source>
        <dbReference type="HAMAP-Rule" id="MF_01368"/>
    </source>
</evidence>
<evidence type="ECO:0000305" key="2"/>
<name>RL17_COXB2</name>